<accession>Q2RFQ0</accession>
<organism>
    <name type="scientific">Moorella thermoacetica (strain ATCC 39073 / JCM 9320)</name>
    <dbReference type="NCBI Taxonomy" id="264732"/>
    <lineage>
        <taxon>Bacteria</taxon>
        <taxon>Bacillati</taxon>
        <taxon>Bacillota</taxon>
        <taxon>Clostridia</taxon>
        <taxon>Moorellales</taxon>
        <taxon>Moorellaceae</taxon>
        <taxon>Moorella</taxon>
    </lineage>
</organism>
<proteinExistence type="inferred from homology"/>
<sequence>MAIKKFKPTSPGRRQMTVSTFAEITATEPYKPLVEPLKKTGGRNNQGRLTVRHRGGGHKRLYRVIDFKRDKDGIPGRVATIEYDPNRSANIALINYADGEKRYILAPENLQVGDQVISGPEADIKVGNALPLSQIPVGTMVHNVELKPGKGGQMARSAGAGAQLMAKEGGYALLRLPSGEVRKVQESCRATVGQVGNLDWENINIGKAGRKRWLGIRPTVRGVVMNPVDHPHGGGEGRAPVGRKHPVTPWGKPAMGAKTRKKRKLSDKLIVKPRNK</sequence>
<comment type="function">
    <text evidence="1">One of the primary rRNA binding proteins. Required for association of the 30S and 50S subunits to form the 70S ribosome, for tRNA binding and peptide bond formation. It has been suggested to have peptidyltransferase activity; this is somewhat controversial. Makes several contacts with the 16S rRNA in the 70S ribosome.</text>
</comment>
<comment type="subunit">
    <text evidence="1">Part of the 50S ribosomal subunit. Forms a bridge to the 30S subunit in the 70S ribosome.</text>
</comment>
<comment type="similarity">
    <text evidence="1">Belongs to the universal ribosomal protein uL2 family.</text>
</comment>
<gene>
    <name evidence="1" type="primary">rplB</name>
    <name type="ordered locus">Moth_2457</name>
</gene>
<feature type="chain" id="PRO_0000237206" description="Large ribosomal subunit protein uL2">
    <location>
        <begin position="1"/>
        <end position="276"/>
    </location>
</feature>
<feature type="region of interest" description="Disordered" evidence="2">
    <location>
        <begin position="225"/>
        <end position="276"/>
    </location>
</feature>
<feature type="compositionally biased region" description="Basic residues" evidence="2">
    <location>
        <begin position="258"/>
        <end position="276"/>
    </location>
</feature>
<dbReference type="EMBL" id="CP000232">
    <property type="protein sequence ID" value="ABC20739.1"/>
    <property type="molecule type" value="Genomic_DNA"/>
</dbReference>
<dbReference type="RefSeq" id="YP_431282.1">
    <property type="nucleotide sequence ID" value="NC_007644.1"/>
</dbReference>
<dbReference type="SMR" id="Q2RFQ0"/>
<dbReference type="STRING" id="264732.Moth_2457"/>
<dbReference type="EnsemblBacteria" id="ABC20739">
    <property type="protein sequence ID" value="ABC20739"/>
    <property type="gene ID" value="Moth_2457"/>
</dbReference>
<dbReference type="KEGG" id="mta:Moth_2457"/>
<dbReference type="PATRIC" id="fig|264732.11.peg.2675"/>
<dbReference type="eggNOG" id="COG0090">
    <property type="taxonomic scope" value="Bacteria"/>
</dbReference>
<dbReference type="HOGENOM" id="CLU_036235_2_1_9"/>
<dbReference type="OrthoDB" id="9778722at2"/>
<dbReference type="GO" id="GO:0015934">
    <property type="term" value="C:large ribosomal subunit"/>
    <property type="evidence" value="ECO:0007669"/>
    <property type="project" value="InterPro"/>
</dbReference>
<dbReference type="GO" id="GO:0019843">
    <property type="term" value="F:rRNA binding"/>
    <property type="evidence" value="ECO:0007669"/>
    <property type="project" value="UniProtKB-UniRule"/>
</dbReference>
<dbReference type="GO" id="GO:0003735">
    <property type="term" value="F:structural constituent of ribosome"/>
    <property type="evidence" value="ECO:0007669"/>
    <property type="project" value="InterPro"/>
</dbReference>
<dbReference type="GO" id="GO:0016740">
    <property type="term" value="F:transferase activity"/>
    <property type="evidence" value="ECO:0007669"/>
    <property type="project" value="InterPro"/>
</dbReference>
<dbReference type="GO" id="GO:0002181">
    <property type="term" value="P:cytoplasmic translation"/>
    <property type="evidence" value="ECO:0007669"/>
    <property type="project" value="TreeGrafter"/>
</dbReference>
<dbReference type="FunFam" id="2.30.30.30:FF:000001">
    <property type="entry name" value="50S ribosomal protein L2"/>
    <property type="match status" value="1"/>
</dbReference>
<dbReference type="FunFam" id="2.40.50.140:FF:000003">
    <property type="entry name" value="50S ribosomal protein L2"/>
    <property type="match status" value="1"/>
</dbReference>
<dbReference type="FunFam" id="4.10.950.10:FF:000001">
    <property type="entry name" value="50S ribosomal protein L2"/>
    <property type="match status" value="1"/>
</dbReference>
<dbReference type="Gene3D" id="2.30.30.30">
    <property type="match status" value="1"/>
</dbReference>
<dbReference type="Gene3D" id="2.40.50.140">
    <property type="entry name" value="Nucleic acid-binding proteins"/>
    <property type="match status" value="1"/>
</dbReference>
<dbReference type="Gene3D" id="4.10.950.10">
    <property type="entry name" value="Ribosomal protein L2, domain 3"/>
    <property type="match status" value="1"/>
</dbReference>
<dbReference type="HAMAP" id="MF_01320_B">
    <property type="entry name" value="Ribosomal_uL2_B"/>
    <property type="match status" value="1"/>
</dbReference>
<dbReference type="InterPro" id="IPR012340">
    <property type="entry name" value="NA-bd_OB-fold"/>
</dbReference>
<dbReference type="InterPro" id="IPR014722">
    <property type="entry name" value="Rib_uL2_dom2"/>
</dbReference>
<dbReference type="InterPro" id="IPR002171">
    <property type="entry name" value="Ribosomal_uL2"/>
</dbReference>
<dbReference type="InterPro" id="IPR005880">
    <property type="entry name" value="Ribosomal_uL2_bac/org-type"/>
</dbReference>
<dbReference type="InterPro" id="IPR022669">
    <property type="entry name" value="Ribosomal_uL2_C"/>
</dbReference>
<dbReference type="InterPro" id="IPR022671">
    <property type="entry name" value="Ribosomal_uL2_CS"/>
</dbReference>
<dbReference type="InterPro" id="IPR014726">
    <property type="entry name" value="Ribosomal_uL2_dom3"/>
</dbReference>
<dbReference type="InterPro" id="IPR022666">
    <property type="entry name" value="Ribosomal_uL2_RNA-bd_dom"/>
</dbReference>
<dbReference type="InterPro" id="IPR008991">
    <property type="entry name" value="Translation_prot_SH3-like_sf"/>
</dbReference>
<dbReference type="NCBIfam" id="TIGR01171">
    <property type="entry name" value="rplB_bact"/>
    <property type="match status" value="1"/>
</dbReference>
<dbReference type="PANTHER" id="PTHR13691:SF5">
    <property type="entry name" value="LARGE RIBOSOMAL SUBUNIT PROTEIN UL2M"/>
    <property type="match status" value="1"/>
</dbReference>
<dbReference type="PANTHER" id="PTHR13691">
    <property type="entry name" value="RIBOSOMAL PROTEIN L2"/>
    <property type="match status" value="1"/>
</dbReference>
<dbReference type="Pfam" id="PF00181">
    <property type="entry name" value="Ribosomal_L2"/>
    <property type="match status" value="1"/>
</dbReference>
<dbReference type="Pfam" id="PF03947">
    <property type="entry name" value="Ribosomal_L2_C"/>
    <property type="match status" value="1"/>
</dbReference>
<dbReference type="PIRSF" id="PIRSF002158">
    <property type="entry name" value="Ribosomal_L2"/>
    <property type="match status" value="1"/>
</dbReference>
<dbReference type="SMART" id="SM01383">
    <property type="entry name" value="Ribosomal_L2"/>
    <property type="match status" value="1"/>
</dbReference>
<dbReference type="SMART" id="SM01382">
    <property type="entry name" value="Ribosomal_L2_C"/>
    <property type="match status" value="1"/>
</dbReference>
<dbReference type="SUPFAM" id="SSF50249">
    <property type="entry name" value="Nucleic acid-binding proteins"/>
    <property type="match status" value="1"/>
</dbReference>
<dbReference type="SUPFAM" id="SSF50104">
    <property type="entry name" value="Translation proteins SH3-like domain"/>
    <property type="match status" value="1"/>
</dbReference>
<dbReference type="PROSITE" id="PS00467">
    <property type="entry name" value="RIBOSOMAL_L2"/>
    <property type="match status" value="1"/>
</dbReference>
<name>RL2_MOOTA</name>
<keyword id="KW-0687">Ribonucleoprotein</keyword>
<keyword id="KW-0689">Ribosomal protein</keyword>
<keyword id="KW-0694">RNA-binding</keyword>
<keyword id="KW-0699">rRNA-binding</keyword>
<protein>
    <recommendedName>
        <fullName evidence="1">Large ribosomal subunit protein uL2</fullName>
    </recommendedName>
    <alternativeName>
        <fullName evidence="3">50S ribosomal protein L2</fullName>
    </alternativeName>
</protein>
<evidence type="ECO:0000255" key="1">
    <source>
        <dbReference type="HAMAP-Rule" id="MF_01320"/>
    </source>
</evidence>
<evidence type="ECO:0000256" key="2">
    <source>
        <dbReference type="SAM" id="MobiDB-lite"/>
    </source>
</evidence>
<evidence type="ECO:0000305" key="3"/>
<reference key="1">
    <citation type="journal article" date="2008" name="Environ. Microbiol.">
        <title>The complete genome sequence of Moorella thermoacetica (f. Clostridium thermoaceticum).</title>
        <authorList>
            <person name="Pierce E."/>
            <person name="Xie G."/>
            <person name="Barabote R.D."/>
            <person name="Saunders E."/>
            <person name="Han C.S."/>
            <person name="Detter J.C."/>
            <person name="Richardson P."/>
            <person name="Brettin T.S."/>
            <person name="Das A."/>
            <person name="Ljungdahl L.G."/>
            <person name="Ragsdale S.W."/>
        </authorList>
    </citation>
    <scope>NUCLEOTIDE SEQUENCE [LARGE SCALE GENOMIC DNA]</scope>
    <source>
        <strain>ATCC 39073 / JCM 9320</strain>
    </source>
</reference>